<dbReference type="EMBL" id="CP000110">
    <property type="protein sequence ID" value="ABB34038.1"/>
    <property type="molecule type" value="Genomic_DNA"/>
</dbReference>
<dbReference type="RefSeq" id="WP_011363291.1">
    <property type="nucleotide sequence ID" value="NC_007516.1"/>
</dbReference>
<dbReference type="SMR" id="Q3AMZ4"/>
<dbReference type="STRING" id="110662.Syncc9605_0262"/>
<dbReference type="KEGG" id="syd:Syncc9605_0262"/>
<dbReference type="eggNOG" id="ENOG50339MH">
    <property type="taxonomic scope" value="Bacteria"/>
</dbReference>
<dbReference type="HOGENOM" id="CLU_205504_1_0_3"/>
<dbReference type="OrthoDB" id="532561at2"/>
<dbReference type="GO" id="GO:0031676">
    <property type="term" value="C:plasma membrane-derived thylakoid membrane"/>
    <property type="evidence" value="ECO:0007669"/>
    <property type="project" value="UniProtKB-SubCell"/>
</dbReference>
<dbReference type="GO" id="GO:0015979">
    <property type="term" value="P:photosynthesis"/>
    <property type="evidence" value="ECO:0007669"/>
    <property type="project" value="InterPro"/>
</dbReference>
<dbReference type="HAMAP" id="MF_00293">
    <property type="entry name" value="PSII_PsbN"/>
    <property type="match status" value="1"/>
</dbReference>
<dbReference type="InterPro" id="IPR003398">
    <property type="entry name" value="PSII_PsbN"/>
</dbReference>
<dbReference type="NCBIfam" id="NF009650">
    <property type="entry name" value="PRK13183.1"/>
    <property type="match status" value="1"/>
</dbReference>
<dbReference type="PANTHER" id="PTHR35326">
    <property type="entry name" value="PROTEIN PSBN"/>
    <property type="match status" value="1"/>
</dbReference>
<dbReference type="PANTHER" id="PTHR35326:SF3">
    <property type="entry name" value="PROTEIN PSBN"/>
    <property type="match status" value="1"/>
</dbReference>
<dbReference type="Pfam" id="PF02468">
    <property type="entry name" value="PsbN"/>
    <property type="match status" value="1"/>
</dbReference>
<accession>Q3AMZ4</accession>
<organism>
    <name type="scientific">Synechococcus sp. (strain CC9605)</name>
    <dbReference type="NCBI Taxonomy" id="110662"/>
    <lineage>
        <taxon>Bacteria</taxon>
        <taxon>Bacillati</taxon>
        <taxon>Cyanobacteriota</taxon>
        <taxon>Cyanophyceae</taxon>
        <taxon>Synechococcales</taxon>
        <taxon>Synechococcaceae</taxon>
        <taxon>Synechococcus</taxon>
    </lineage>
</organism>
<evidence type="ECO:0000255" key="1">
    <source>
        <dbReference type="HAMAP-Rule" id="MF_00293"/>
    </source>
</evidence>
<protein>
    <recommendedName>
        <fullName evidence="1">Protein PsbN</fullName>
    </recommendedName>
</protein>
<gene>
    <name evidence="1" type="primary">psbN</name>
    <name type="ordered locus">Syncc9605_0262</name>
</gene>
<keyword id="KW-0472">Membrane</keyword>
<keyword id="KW-0793">Thylakoid</keyword>
<keyword id="KW-0812">Transmembrane</keyword>
<keyword id="KW-1133">Transmembrane helix</keyword>
<feature type="chain" id="PRO_0000232788" description="Protein PsbN">
    <location>
        <begin position="1"/>
        <end position="46"/>
    </location>
</feature>
<feature type="transmembrane region" description="Helical" evidence="1">
    <location>
        <begin position="7"/>
        <end position="27"/>
    </location>
</feature>
<proteinExistence type="inferred from homology"/>
<reference key="1">
    <citation type="submission" date="2005-07" db="EMBL/GenBank/DDBJ databases">
        <title>Complete sequence of Synechococcus sp. CC9605.</title>
        <authorList>
            <consortium name="US DOE Joint Genome Institute"/>
            <person name="Copeland A."/>
            <person name="Lucas S."/>
            <person name="Lapidus A."/>
            <person name="Barry K."/>
            <person name="Detter J.C."/>
            <person name="Glavina T."/>
            <person name="Hammon N."/>
            <person name="Israni S."/>
            <person name="Pitluck S."/>
            <person name="Schmutz J."/>
            <person name="Martinez M."/>
            <person name="Larimer F."/>
            <person name="Land M."/>
            <person name="Kyrpides N."/>
            <person name="Ivanova N."/>
            <person name="Richardson P."/>
        </authorList>
    </citation>
    <scope>NUCLEOTIDE SEQUENCE [LARGE SCALE GENOMIC DNA]</scope>
    <source>
        <strain>CC9605</strain>
    </source>
</reference>
<name>PSBN_SYNSC</name>
<sequence length="46" mass="4783">METSSPALSVAIGVLAVLFGLTGFGVYQAFGPPSKALDDPFDDHED</sequence>
<comment type="function">
    <text evidence="1">May play a role in photosystem I and II biogenesis.</text>
</comment>
<comment type="subcellular location">
    <subcellularLocation>
        <location evidence="1">Cellular thylakoid membrane</location>
        <topology evidence="1">Single-pass membrane protein</topology>
    </subcellularLocation>
</comment>
<comment type="similarity">
    <text evidence="1">Belongs to the PsbN family.</text>
</comment>
<comment type="caution">
    <text evidence="1">Originally thought to be a component of PSII; based on experiments in Synechocystis, N.tabacum and barley, and its absence from PSII in T.elongatus and T.vulcanus, this is probably not true.</text>
</comment>